<accession>P69042</accession>
<accession>Q94PL2</accession>
<name>IF1C_LAMPU</name>
<proteinExistence type="inferred from homology"/>
<organism>
    <name type="scientific">Lamium purpureum</name>
    <name type="common">Purple dead-nettle</name>
    <dbReference type="NCBI Taxonomy" id="53164"/>
    <lineage>
        <taxon>Eukaryota</taxon>
        <taxon>Viridiplantae</taxon>
        <taxon>Streptophyta</taxon>
        <taxon>Embryophyta</taxon>
        <taxon>Tracheophyta</taxon>
        <taxon>Spermatophyta</taxon>
        <taxon>Magnoliopsida</taxon>
        <taxon>eudicotyledons</taxon>
        <taxon>Gunneridae</taxon>
        <taxon>Pentapetalae</taxon>
        <taxon>asterids</taxon>
        <taxon>lamiids</taxon>
        <taxon>Lamiales</taxon>
        <taxon>Lamiaceae</taxon>
        <taxon>Lamioideae</taxon>
        <taxon>Lamieae</taxon>
        <taxon>Lamium</taxon>
    </lineage>
</organism>
<gene>
    <name evidence="1" type="primary">infA</name>
</gene>
<sequence length="77" mass="9122">MKEQKWIHEGLITESLPNGMFRVRLDNEDLILGYVSGKIRRSFIRILPGDKVKIEVSRYDSTRGRIIYRLRNKDSKD</sequence>
<comment type="function">
    <text evidence="1">One of the essential components for the initiation of protein synthesis. Stabilizes the binding of IF-2 and IF-3 on the 30S subunit to which N-formylmethionyl-tRNA(fMet) subsequently binds. Helps modulate mRNA selection, yielding the 30S pre-initiation complex (PIC). Upon addition of the 50S ribosomal subunit IF-1, IF-2 and IF-3 are released leaving the mature 70S translation initiation complex.</text>
</comment>
<comment type="subunit">
    <text evidence="1">Component of the 30S ribosomal translation pre-initiation complex which assembles on the 30S ribosome in the order IF-2 and IF-3, IF-1 and N-formylmethionyl-tRNA(fMet); mRNA recruitment can occur at any time during PIC assembly.</text>
</comment>
<comment type="subcellular location">
    <subcellularLocation>
        <location evidence="1">Plastid</location>
        <location evidence="1">Chloroplast</location>
    </subcellularLocation>
</comment>
<comment type="similarity">
    <text evidence="1">Belongs to the IF-1 family.</text>
</comment>
<protein>
    <recommendedName>
        <fullName evidence="1">Translation initiation factor IF-1, chloroplastic</fullName>
    </recommendedName>
</protein>
<reference key="1">
    <citation type="journal article" date="2001" name="Plant Cell">
        <title>Many parallel losses of infA from chloroplast DNA during angiosperm evolution with multiple independent transfers to the nucleus.</title>
        <authorList>
            <person name="Millen R.S."/>
            <person name="Olmstead R.G."/>
            <person name="Adams K.L."/>
            <person name="Palmer J.D."/>
            <person name="Lao N.T."/>
            <person name="Heggie L."/>
            <person name="Kavanagh T.A."/>
            <person name="Hibberd J.M."/>
            <person name="Gray J.C."/>
            <person name="Morden C.W."/>
            <person name="Calie P.J."/>
            <person name="Jermiin L.S."/>
            <person name="Wolfe K.H."/>
        </authorList>
    </citation>
    <scope>NUCLEOTIDE SEQUENCE [GENOMIC DNA]</scope>
</reference>
<geneLocation type="chloroplast"/>
<keyword id="KW-0150">Chloroplast</keyword>
<keyword id="KW-0396">Initiation factor</keyword>
<keyword id="KW-0934">Plastid</keyword>
<keyword id="KW-0648">Protein biosynthesis</keyword>
<keyword id="KW-0694">RNA-binding</keyword>
<keyword id="KW-0699">rRNA-binding</keyword>
<feature type="chain" id="PRO_0000095934" description="Translation initiation factor IF-1, chloroplastic">
    <location>
        <begin position="1"/>
        <end position="77"/>
    </location>
</feature>
<feature type="domain" description="S1-like" evidence="1">
    <location>
        <begin position="1"/>
        <end position="71"/>
    </location>
</feature>
<dbReference type="EMBL" id="AF347660">
    <property type="protein sequence ID" value="AAK38865.1"/>
    <property type="molecule type" value="Genomic_DNA"/>
</dbReference>
<dbReference type="SMR" id="P69042"/>
<dbReference type="GO" id="GO:0009507">
    <property type="term" value="C:chloroplast"/>
    <property type="evidence" value="ECO:0007669"/>
    <property type="project" value="UniProtKB-SubCell"/>
</dbReference>
<dbReference type="GO" id="GO:0005829">
    <property type="term" value="C:cytosol"/>
    <property type="evidence" value="ECO:0007669"/>
    <property type="project" value="TreeGrafter"/>
</dbReference>
<dbReference type="GO" id="GO:0043022">
    <property type="term" value="F:ribosome binding"/>
    <property type="evidence" value="ECO:0007669"/>
    <property type="project" value="UniProtKB-UniRule"/>
</dbReference>
<dbReference type="GO" id="GO:0019843">
    <property type="term" value="F:rRNA binding"/>
    <property type="evidence" value="ECO:0007669"/>
    <property type="project" value="UniProtKB-UniRule"/>
</dbReference>
<dbReference type="GO" id="GO:0003743">
    <property type="term" value="F:translation initiation factor activity"/>
    <property type="evidence" value="ECO:0007669"/>
    <property type="project" value="UniProtKB-UniRule"/>
</dbReference>
<dbReference type="CDD" id="cd04451">
    <property type="entry name" value="S1_IF1"/>
    <property type="match status" value="1"/>
</dbReference>
<dbReference type="FunFam" id="2.40.50.140:FF:000019">
    <property type="entry name" value="Translation initiation factor IF-1, chloroplastic"/>
    <property type="match status" value="1"/>
</dbReference>
<dbReference type="Gene3D" id="2.40.50.140">
    <property type="entry name" value="Nucleic acid-binding proteins"/>
    <property type="match status" value="1"/>
</dbReference>
<dbReference type="HAMAP" id="MF_00075">
    <property type="entry name" value="IF_1"/>
    <property type="match status" value="1"/>
</dbReference>
<dbReference type="InterPro" id="IPR012340">
    <property type="entry name" value="NA-bd_OB-fold"/>
</dbReference>
<dbReference type="InterPro" id="IPR006196">
    <property type="entry name" value="RNA-binding_domain_S1_IF1"/>
</dbReference>
<dbReference type="InterPro" id="IPR003029">
    <property type="entry name" value="S1_domain"/>
</dbReference>
<dbReference type="InterPro" id="IPR004368">
    <property type="entry name" value="TIF_IF1"/>
</dbReference>
<dbReference type="NCBIfam" id="TIGR00008">
    <property type="entry name" value="infA"/>
    <property type="match status" value="1"/>
</dbReference>
<dbReference type="PANTHER" id="PTHR33370">
    <property type="entry name" value="TRANSLATION INITIATION FACTOR IF-1, CHLOROPLASTIC"/>
    <property type="match status" value="1"/>
</dbReference>
<dbReference type="PANTHER" id="PTHR33370:SF1">
    <property type="entry name" value="TRANSLATION INITIATION FACTOR IF-1, CHLOROPLASTIC"/>
    <property type="match status" value="1"/>
</dbReference>
<dbReference type="Pfam" id="PF01176">
    <property type="entry name" value="eIF-1a"/>
    <property type="match status" value="1"/>
</dbReference>
<dbReference type="SMART" id="SM00316">
    <property type="entry name" value="S1"/>
    <property type="match status" value="1"/>
</dbReference>
<dbReference type="SUPFAM" id="SSF50249">
    <property type="entry name" value="Nucleic acid-binding proteins"/>
    <property type="match status" value="1"/>
</dbReference>
<dbReference type="PROSITE" id="PS50832">
    <property type="entry name" value="S1_IF1_TYPE"/>
    <property type="match status" value="1"/>
</dbReference>
<evidence type="ECO:0000255" key="1">
    <source>
        <dbReference type="HAMAP-Rule" id="MF_00075"/>
    </source>
</evidence>